<sequence length="251" mass="28852">MNEAVKTLDGWFCLHDFRSIDWAAWRELNPGNQELMLNELSHFLSDMEITKNIGEGEHTIYSILGQKADLVFFTLRDSLEALNEVENRFNKLAIADYLLPTYSYISVVELSNYLASHMAGGDDPYQNKGVRARLYPALPPKKHICFYPMSKKRDGADNWYMLPMEERQQLIRDHGLIGRSYAGKVQQIIGGSIGFDDYEWGVTLFSDDALEFKRIVTEMRFDEASARYAEFGSFFIGNLLLSEQLSKLFTI</sequence>
<keyword id="KW-0002">3D-structure</keyword>
<keyword id="KW-0349">Heme</keyword>
<keyword id="KW-0350">Heme biosynthesis</keyword>
<keyword id="KW-0408">Iron</keyword>
<keyword id="KW-0479">Metal-binding</keyword>
<keyword id="KW-0560">Oxidoreductase</keyword>
<keyword id="KW-1185">Reference proteome</keyword>
<feature type="chain" id="PRO_0000294042" description="Coproheme decarboxylase">
    <location>
        <begin position="1"/>
        <end position="251"/>
    </location>
</feature>
<feature type="active site" evidence="1 10">
    <location>
        <position position="147"/>
    </location>
</feature>
<feature type="binding site" evidence="1 3 12">
    <location>
        <position position="133"/>
    </location>
    <ligand>
        <name>Fe-coproporphyrin III</name>
        <dbReference type="ChEBI" id="CHEBI:68438"/>
    </ligand>
</feature>
<feature type="binding site" evidence="1 3 12">
    <location>
        <begin position="147"/>
        <end position="151"/>
    </location>
    <ligand>
        <name>Fe-coproporphyrin III</name>
        <dbReference type="ChEBI" id="CHEBI:68438"/>
    </ligand>
</feature>
<feature type="binding site" description="axial binding residue" evidence="1 3 12">
    <location>
        <position position="174"/>
    </location>
    <ligand>
        <name>Fe-coproporphyrin III</name>
        <dbReference type="ChEBI" id="CHEBI:68438"/>
    </ligand>
    <ligandPart>
        <name>Fe</name>
        <dbReference type="ChEBI" id="CHEBI:18248"/>
    </ligandPart>
</feature>
<feature type="binding site" evidence="1 3 12">
    <location>
        <position position="187"/>
    </location>
    <ligand>
        <name>Fe-coproporphyrin III</name>
        <dbReference type="ChEBI" id="CHEBI:68438"/>
    </ligand>
</feature>
<feature type="binding site" evidence="1 3 12">
    <location>
        <position position="225"/>
    </location>
    <ligand>
        <name>Fe-coproporphyrin III</name>
        <dbReference type="ChEBI" id="CHEBI:68438"/>
    </ligand>
</feature>
<feature type="mutagenesis site" description="Loss of activity." evidence="5">
    <original>Y</original>
    <variation>A</variation>
    <variation>H</variation>
    <location>
        <position position="147"/>
    </location>
</feature>
<feature type="mutagenesis site" description="Slight decrease in activity." evidence="4">
    <original>M</original>
    <variation>A</variation>
    <location>
        <position position="149"/>
    </location>
</feature>
<feature type="mutagenesis site" description="Alters Fe-coproporphyrin III binding. Does not affect kcat, but the reaction is less efficient and a higher excess of hydrogen peroxide is needed." evidence="4">
    <original>Q</original>
    <variation>A</variation>
    <location>
        <position position="187"/>
    </location>
</feature>
<feature type="strand" evidence="15">
    <location>
        <begin position="7"/>
        <end position="20"/>
    </location>
</feature>
<feature type="helix" evidence="15">
    <location>
        <begin position="22"/>
        <end position="26"/>
    </location>
</feature>
<feature type="helix" evidence="15">
    <location>
        <begin position="30"/>
        <end position="52"/>
    </location>
</feature>
<feature type="strand" evidence="15">
    <location>
        <begin position="55"/>
        <end position="63"/>
    </location>
</feature>
<feature type="strand" evidence="16">
    <location>
        <begin position="65"/>
        <end position="67"/>
    </location>
</feature>
<feature type="strand" evidence="15">
    <location>
        <begin position="69"/>
        <end position="78"/>
    </location>
</feature>
<feature type="helix" evidence="15">
    <location>
        <begin position="79"/>
        <end position="90"/>
    </location>
</feature>
<feature type="helix" evidence="15">
    <location>
        <begin position="93"/>
        <end position="97"/>
    </location>
</feature>
<feature type="strand" evidence="15">
    <location>
        <begin position="98"/>
        <end position="114"/>
    </location>
</feature>
<feature type="strand" evidence="15">
    <location>
        <begin position="120"/>
        <end position="122"/>
    </location>
</feature>
<feature type="helix" evidence="15">
    <location>
        <begin position="124"/>
        <end position="126"/>
    </location>
</feature>
<feature type="helix" evidence="15">
    <location>
        <begin position="128"/>
        <end position="134"/>
    </location>
</feature>
<feature type="strand" evidence="15">
    <location>
        <begin position="142"/>
        <end position="151"/>
    </location>
</feature>
<feature type="helix" evidence="15">
    <location>
        <begin position="159"/>
        <end position="161"/>
    </location>
</feature>
<feature type="helix" evidence="15">
    <location>
        <begin position="164"/>
        <end position="179"/>
    </location>
</feature>
<feature type="turn" evidence="15">
    <location>
        <begin position="180"/>
        <end position="184"/>
    </location>
</feature>
<feature type="strand" evidence="15">
    <location>
        <begin position="186"/>
        <end position="191"/>
    </location>
</feature>
<feature type="turn" evidence="15">
    <location>
        <begin position="193"/>
        <end position="195"/>
    </location>
</feature>
<feature type="strand" evidence="15">
    <location>
        <begin position="196"/>
        <end position="208"/>
    </location>
</feature>
<feature type="helix" evidence="15">
    <location>
        <begin position="210"/>
        <end position="220"/>
    </location>
</feature>
<feature type="helix" evidence="15">
    <location>
        <begin position="223"/>
        <end position="226"/>
    </location>
</feature>
<feature type="strand" evidence="15">
    <location>
        <begin position="229"/>
        <end position="231"/>
    </location>
</feature>
<feature type="strand" evidence="15">
    <location>
        <begin position="235"/>
        <end position="239"/>
    </location>
</feature>
<feature type="helix" evidence="15">
    <location>
        <begin position="242"/>
        <end position="248"/>
    </location>
</feature>
<evidence type="ECO:0000255" key="1">
    <source>
        <dbReference type="HAMAP-Rule" id="MF_01442"/>
    </source>
</evidence>
<evidence type="ECO:0000269" key="2">
    <source>
    </source>
</evidence>
<evidence type="ECO:0000269" key="3">
    <source>
    </source>
</evidence>
<evidence type="ECO:0000269" key="4">
    <source>
    </source>
</evidence>
<evidence type="ECO:0000269" key="5">
    <source>
    </source>
</evidence>
<evidence type="ECO:0000303" key="6">
    <source>
    </source>
</evidence>
<evidence type="ECO:0000303" key="7">
    <source>
    </source>
</evidence>
<evidence type="ECO:0000305" key="8"/>
<evidence type="ECO:0000305" key="9">
    <source>
    </source>
</evidence>
<evidence type="ECO:0000305" key="10">
    <source>
    </source>
</evidence>
<evidence type="ECO:0007744" key="11">
    <source>
        <dbReference type="PDB" id="4WWS"/>
    </source>
</evidence>
<evidence type="ECO:0007744" key="12">
    <source>
        <dbReference type="PDB" id="5LOQ"/>
    </source>
</evidence>
<evidence type="ECO:0007744" key="13">
    <source>
        <dbReference type="PDB" id="6FXJ"/>
    </source>
</evidence>
<evidence type="ECO:0007744" key="14">
    <source>
        <dbReference type="PDB" id="6FXQ"/>
    </source>
</evidence>
<evidence type="ECO:0007829" key="15">
    <source>
        <dbReference type="PDB" id="5LOQ"/>
    </source>
</evidence>
<evidence type="ECO:0007829" key="16">
    <source>
        <dbReference type="PDB" id="6FXJ"/>
    </source>
</evidence>
<gene>
    <name evidence="1 7" type="primary">chdC</name>
    <name evidence="6" type="synonym">hemQ</name>
    <name type="ordered locus">lmo2113</name>
</gene>
<reference key="1">
    <citation type="journal article" date="2001" name="Science">
        <title>Comparative genomics of Listeria species.</title>
        <authorList>
            <person name="Glaser P."/>
            <person name="Frangeul L."/>
            <person name="Buchrieser C."/>
            <person name="Rusniok C."/>
            <person name="Amend A."/>
            <person name="Baquero F."/>
            <person name="Berche P."/>
            <person name="Bloecker H."/>
            <person name="Brandt P."/>
            <person name="Chakraborty T."/>
            <person name="Charbit A."/>
            <person name="Chetouani F."/>
            <person name="Couve E."/>
            <person name="de Daruvar A."/>
            <person name="Dehoux P."/>
            <person name="Domann E."/>
            <person name="Dominguez-Bernal G."/>
            <person name="Duchaud E."/>
            <person name="Durant L."/>
            <person name="Dussurget O."/>
            <person name="Entian K.-D."/>
            <person name="Fsihi H."/>
            <person name="Garcia-del Portillo F."/>
            <person name="Garrido P."/>
            <person name="Gautier L."/>
            <person name="Goebel W."/>
            <person name="Gomez-Lopez N."/>
            <person name="Hain T."/>
            <person name="Hauf J."/>
            <person name="Jackson D."/>
            <person name="Jones L.-M."/>
            <person name="Kaerst U."/>
            <person name="Kreft J."/>
            <person name="Kuhn M."/>
            <person name="Kunst F."/>
            <person name="Kurapkat G."/>
            <person name="Madueno E."/>
            <person name="Maitournam A."/>
            <person name="Mata Vicente J."/>
            <person name="Ng E."/>
            <person name="Nedjari H."/>
            <person name="Nordsiek G."/>
            <person name="Novella S."/>
            <person name="de Pablos B."/>
            <person name="Perez-Diaz J.-C."/>
            <person name="Purcell R."/>
            <person name="Remmel B."/>
            <person name="Rose M."/>
            <person name="Schlueter T."/>
            <person name="Simoes N."/>
            <person name="Tierrez A."/>
            <person name="Vazquez-Boland J.-A."/>
            <person name="Voss H."/>
            <person name="Wehland J."/>
            <person name="Cossart P."/>
        </authorList>
    </citation>
    <scope>NUCLEOTIDE SEQUENCE [LARGE SCALE GENOMIC DNA]</scope>
    <source>
        <strain>ATCC BAA-679 / EGD-e</strain>
    </source>
</reference>
<reference key="2">
    <citation type="journal article" date="2018" name="Biochemistry">
        <title>Insights into the active site of coproheme decarboxylase from Listeria monocytogenes.</title>
        <authorList>
            <person name="Milazzo L."/>
            <person name="Hofbauer S."/>
            <person name="Howes B.D."/>
            <person name="Gabler T."/>
            <person name="Furtmueller P.G."/>
            <person name="Obinger C."/>
            <person name="Smulevich G."/>
        </authorList>
    </citation>
    <scope>FUNCTION</scope>
    <scope>CATALYTIC ACTIVITY</scope>
    <scope>MUTAGENESIS OF MET-149 AND GLN-187</scope>
</reference>
<reference evidence="11" key="3">
    <citation type="journal article" date="2015" name="Arch. Biochem. Biophys.">
        <title>Structure and heme-binding properties of HemQ (chlorite dismutase-like protein) from Listeria monocytogenes.</title>
        <authorList>
            <person name="Hofbauer S."/>
            <person name="Hagmuller A."/>
            <person name="Schaffner I."/>
            <person name="Mlynek G."/>
            <person name="Krutzler M."/>
            <person name="Stadlmayr G."/>
            <person name="Pirker K.F."/>
            <person name="Obinger C."/>
            <person name="Daims H."/>
            <person name="Djinovic-Carugo K."/>
            <person name="Furtmuller P.G."/>
        </authorList>
    </citation>
    <scope>X-RAY CRYSTALLOGRAPHY (2.00 ANGSTROMS)</scope>
    <scope>COFACTOR</scope>
    <scope>SUBUNIT</scope>
</reference>
<reference evidence="12" key="4">
    <citation type="journal article" date="2016" name="FEBS J.">
        <title>Hydrogen peroxide-mediated conversion of coproheme to heme b by HemQ-lessons from the first crystal structure and kinetic studies.</title>
        <authorList>
            <person name="Hofbauer S."/>
            <person name="Mlynek G."/>
            <person name="Milazzo L."/>
            <person name="Puhringer D."/>
            <person name="Maresch D."/>
            <person name="Schaffner I."/>
            <person name="Furtmuller P.G."/>
            <person name="Smulevich G."/>
            <person name="Djinovic-Carugo K."/>
            <person name="Obinger C."/>
        </authorList>
    </citation>
    <scope>X-RAY CRYSTALLOGRAPHY (1.69 ANGSTROMS) OF 2-251 IN COMPLEX WITH FE-COPROPORPHYRIN III</scope>
    <scope>FUNCTION</scope>
    <scope>CATALYTIC ACTIVITY</scope>
    <scope>COFACTOR</scope>
    <scope>BIOPHYSICOCHEMICAL PROPERTIES</scope>
    <scope>PATHWAY</scope>
    <scope>SUBUNIT</scope>
</reference>
<reference evidence="13 14" key="5">
    <citation type="journal article" date="2019" name="ACS Catal.">
        <title>Redox cofactor rotates during its stepwise decarboxylation: molecular mechanism of conversion of coproheme to heme b.</title>
        <authorList>
            <person name="Milazzo L."/>
            <person name="Gabler T."/>
            <person name="Puhringer D."/>
            <person name="Jandova Z."/>
            <person name="Maresch D."/>
            <person name="Michlits H."/>
            <person name="Pfanzagl V."/>
            <person name="Djinovic-Carugo K."/>
            <person name="Oostenbrink C."/>
            <person name="Furtmuller P.G."/>
            <person name="Obinger C."/>
            <person name="Smulevich G."/>
            <person name="Hofbauer S."/>
        </authorList>
    </citation>
    <scope>X-RAY CRYSTALLOGRAPHY (1.69 ANGSTROMS) OF 2-251</scope>
    <scope>FUNCTION</scope>
    <scope>CATALYTIC ACTIVITY</scope>
    <scope>REACTION MECHANISM</scope>
    <scope>SUBUNIT</scope>
    <scope>ACTIVE SITE</scope>
    <scope>MUTAGENESIS OF TYR-147</scope>
</reference>
<dbReference type="EC" id="1.3.98.5" evidence="1 3 4 5"/>
<dbReference type="EMBL" id="AL591982">
    <property type="protein sequence ID" value="CAD00191.1"/>
    <property type="molecule type" value="Genomic_DNA"/>
</dbReference>
<dbReference type="PIR" id="AI1338">
    <property type="entry name" value="AI1338"/>
</dbReference>
<dbReference type="RefSeq" id="NP_465637.1">
    <property type="nucleotide sequence ID" value="NC_003210.1"/>
</dbReference>
<dbReference type="RefSeq" id="WP_003722373.1">
    <property type="nucleotide sequence ID" value="NZ_CP149495.1"/>
</dbReference>
<dbReference type="PDB" id="4WWS">
    <property type="method" value="X-ray"/>
    <property type="resolution" value="2.00 A"/>
    <property type="chains" value="A/B/C/D/E=1-251"/>
</dbReference>
<dbReference type="PDB" id="5LOQ">
    <property type="method" value="X-ray"/>
    <property type="resolution" value="1.69 A"/>
    <property type="chains" value="A/B/C/D/E=2-251"/>
</dbReference>
<dbReference type="PDB" id="6FXJ">
    <property type="method" value="X-ray"/>
    <property type="resolution" value="1.79 A"/>
    <property type="chains" value="A/B/C/D/E=1-251"/>
</dbReference>
<dbReference type="PDB" id="6FXQ">
    <property type="method" value="X-ray"/>
    <property type="resolution" value="1.69 A"/>
    <property type="chains" value="A/B/C/D/E=2-251"/>
</dbReference>
<dbReference type="PDBsum" id="4WWS"/>
<dbReference type="PDBsum" id="5LOQ"/>
<dbReference type="PDBsum" id="6FXJ"/>
<dbReference type="PDBsum" id="6FXQ"/>
<dbReference type="SMR" id="Q8Y5F1"/>
<dbReference type="STRING" id="169963.gene:17594799"/>
<dbReference type="PaxDb" id="169963-lmo2113"/>
<dbReference type="EnsemblBacteria" id="CAD00191">
    <property type="protein sequence ID" value="CAD00191"/>
    <property type="gene ID" value="CAD00191"/>
</dbReference>
<dbReference type="GeneID" id="984744"/>
<dbReference type="KEGG" id="lmo:lmo2113"/>
<dbReference type="PATRIC" id="fig|169963.11.peg.2165"/>
<dbReference type="eggNOG" id="COG3253">
    <property type="taxonomic scope" value="Bacteria"/>
</dbReference>
<dbReference type="HOGENOM" id="CLU_063226_1_0_9"/>
<dbReference type="OrthoDB" id="9773646at2"/>
<dbReference type="PhylomeDB" id="Q8Y5F1"/>
<dbReference type="BioCyc" id="LMON169963:LMO2113-MONOMER"/>
<dbReference type="BRENDA" id="1.3.98.5">
    <property type="organism ID" value="3045"/>
</dbReference>
<dbReference type="UniPathway" id="UPA00252"/>
<dbReference type="EvolutionaryTrace" id="Q8Y5F1"/>
<dbReference type="Proteomes" id="UP000000817">
    <property type="component" value="Chromosome"/>
</dbReference>
<dbReference type="GO" id="GO:0020037">
    <property type="term" value="F:heme binding"/>
    <property type="evidence" value="ECO:0007669"/>
    <property type="project" value="InterPro"/>
</dbReference>
<dbReference type="GO" id="GO:0046872">
    <property type="term" value="F:metal ion binding"/>
    <property type="evidence" value="ECO:0007669"/>
    <property type="project" value="UniProtKB-KW"/>
</dbReference>
<dbReference type="GO" id="GO:0016634">
    <property type="term" value="F:oxidoreductase activity, acting on the CH-CH group of donors, oxygen as acceptor"/>
    <property type="evidence" value="ECO:0007669"/>
    <property type="project" value="UniProtKB-UniRule"/>
</dbReference>
<dbReference type="GO" id="GO:0004601">
    <property type="term" value="F:peroxidase activity"/>
    <property type="evidence" value="ECO:0007669"/>
    <property type="project" value="InterPro"/>
</dbReference>
<dbReference type="GO" id="GO:0006785">
    <property type="term" value="P:heme B biosynthetic process"/>
    <property type="evidence" value="ECO:0007669"/>
    <property type="project" value="UniProtKB-UniRule"/>
</dbReference>
<dbReference type="Gene3D" id="3.30.70.1030">
    <property type="entry name" value="Apc35880, domain 1"/>
    <property type="match status" value="2"/>
</dbReference>
<dbReference type="HAMAP" id="MF_01442">
    <property type="entry name" value="Coproheme_decarbox_1"/>
    <property type="match status" value="1"/>
</dbReference>
<dbReference type="InterPro" id="IPR031332">
    <property type="entry name" value="CHDC"/>
</dbReference>
<dbReference type="InterPro" id="IPR010644">
    <property type="entry name" value="ChdC/CLD"/>
</dbReference>
<dbReference type="InterPro" id="IPR011008">
    <property type="entry name" value="Dimeric_a/b-barrel"/>
</dbReference>
<dbReference type="NCBIfam" id="NF008913">
    <property type="entry name" value="PRK12276.1"/>
    <property type="match status" value="1"/>
</dbReference>
<dbReference type="PANTHER" id="PTHR36843:SF1">
    <property type="entry name" value="COPROHEME DECARBOXYLASE"/>
    <property type="match status" value="1"/>
</dbReference>
<dbReference type="PANTHER" id="PTHR36843">
    <property type="entry name" value="HEME-DEPENDENT PEROXIDASE YWFI-RELATED"/>
    <property type="match status" value="1"/>
</dbReference>
<dbReference type="Pfam" id="PF06778">
    <property type="entry name" value="Chlor_dismutase"/>
    <property type="match status" value="1"/>
</dbReference>
<dbReference type="SUPFAM" id="SSF54909">
    <property type="entry name" value="Dimeric alpha+beta barrel"/>
    <property type="match status" value="1"/>
</dbReference>
<name>CHDC_LISMO</name>
<organism>
    <name type="scientific">Listeria monocytogenes serovar 1/2a (strain ATCC BAA-679 / EGD-e)</name>
    <dbReference type="NCBI Taxonomy" id="169963"/>
    <lineage>
        <taxon>Bacteria</taxon>
        <taxon>Bacillati</taxon>
        <taxon>Bacillota</taxon>
        <taxon>Bacilli</taxon>
        <taxon>Bacillales</taxon>
        <taxon>Listeriaceae</taxon>
        <taxon>Listeria</taxon>
    </lineage>
</organism>
<proteinExistence type="evidence at protein level"/>
<protein>
    <recommendedName>
        <fullName evidence="1 7">Coproheme decarboxylase</fullName>
        <ecNumber evidence="1 3 4 5">1.3.98.5</ecNumber>
    </recommendedName>
    <alternativeName>
        <fullName evidence="1 8">Coproheme III oxidative decarboxylase</fullName>
    </alternativeName>
    <alternativeName>
        <fullName evidence="1 8">Hydrogen peroxide-dependent heme synthase</fullName>
    </alternativeName>
    <alternativeName>
        <fullName evidence="6">LmCld</fullName>
    </alternativeName>
</protein>
<accession>Q8Y5F1</accession>
<comment type="function">
    <text evidence="3 4 5">Involved in coproporphyrin-dependent heme b biosynthesis (PubMed:27758026, PubMed:31423350). Catalyzes the decarboxylation of Fe-coproporphyrin III (coproheme) to heme b (protoheme IX), the last step of the pathway (PubMed:27758026, PubMed:29536725, PubMed:31423350). The reaction occurs in a stepwise manner with a three-propionate intermediate (PubMed:27758026, PubMed:31423350).</text>
</comment>
<comment type="catalytic activity">
    <reaction evidence="1 3 4 5">
        <text>Fe-coproporphyrin III + 2 H2O2 + 2 H(+) = heme b + 2 CO2 + 4 H2O</text>
        <dbReference type="Rhea" id="RHEA:56516"/>
        <dbReference type="ChEBI" id="CHEBI:15377"/>
        <dbReference type="ChEBI" id="CHEBI:15378"/>
        <dbReference type="ChEBI" id="CHEBI:16240"/>
        <dbReference type="ChEBI" id="CHEBI:16526"/>
        <dbReference type="ChEBI" id="CHEBI:60344"/>
        <dbReference type="ChEBI" id="CHEBI:68438"/>
        <dbReference type="EC" id="1.3.98.5"/>
    </reaction>
    <physiologicalReaction direction="left-to-right" evidence="1 3 5">
        <dbReference type="Rhea" id="RHEA:56517"/>
    </physiologicalReaction>
</comment>
<comment type="catalytic activity">
    <reaction evidence="1 5">
        <text>Fe-coproporphyrin III + H2O2 + H(+) = harderoheme III + CO2 + 2 H2O</text>
        <dbReference type="Rhea" id="RHEA:57940"/>
        <dbReference type="ChEBI" id="CHEBI:15377"/>
        <dbReference type="ChEBI" id="CHEBI:15378"/>
        <dbReference type="ChEBI" id="CHEBI:16240"/>
        <dbReference type="ChEBI" id="CHEBI:16526"/>
        <dbReference type="ChEBI" id="CHEBI:68438"/>
        <dbReference type="ChEBI" id="CHEBI:142463"/>
    </reaction>
    <physiologicalReaction direction="left-to-right" evidence="1 3 5">
        <dbReference type="Rhea" id="RHEA:57941"/>
    </physiologicalReaction>
</comment>
<comment type="catalytic activity">
    <reaction evidence="1 5">
        <text>harderoheme III + H2O2 + H(+) = heme b + CO2 + 2 H2O</text>
        <dbReference type="Rhea" id="RHEA:57944"/>
        <dbReference type="ChEBI" id="CHEBI:15377"/>
        <dbReference type="ChEBI" id="CHEBI:15378"/>
        <dbReference type="ChEBI" id="CHEBI:16240"/>
        <dbReference type="ChEBI" id="CHEBI:16526"/>
        <dbReference type="ChEBI" id="CHEBI:60344"/>
        <dbReference type="ChEBI" id="CHEBI:142463"/>
    </reaction>
    <physiologicalReaction direction="left-to-right" evidence="1 3 5">
        <dbReference type="Rhea" id="RHEA:57945"/>
    </physiologicalReaction>
</comment>
<comment type="cofactor">
    <cofactor evidence="1 3">
        <name>Fe-coproporphyrin III</name>
        <dbReference type="ChEBI" id="CHEBI:68438"/>
    </cofactor>
    <text evidence="2 3">Fe-coproporphyrin III acts both as a substrate and a redox cofactor (PubMed:27758026). Was originally thought to use heme as a cofactor (PubMed:25602700).</text>
</comment>
<comment type="biophysicochemical properties">
    <kinetics>
        <KM evidence="3">37.1 uM for H(2)O(2)</KM>
    </kinetics>
</comment>
<comment type="pathway">
    <text evidence="1 9">Porphyrin-containing compound metabolism; protoheme biosynthesis.</text>
</comment>
<comment type="subunit">
    <text evidence="2 3 5">Homopentamer (PubMed:25602700, PubMed:27758026, PubMed:31423350). Homohexamer in solution (PubMed:25602700).</text>
</comment>
<comment type="similarity">
    <text evidence="1 8">Belongs to the ChdC family. Type 1 subfamily.</text>
</comment>